<protein>
    <recommendedName>
        <fullName>GTP-binding protein YPT11</fullName>
    </recommendedName>
    <alternativeName>
        <fullName>Rab GTPase YPT11</fullName>
    </alternativeName>
</protein>
<proteinExistence type="inferred from homology"/>
<name>YPT11_YEAS6</name>
<dbReference type="EMBL" id="ABSV01001937">
    <property type="protein sequence ID" value="EDZ69883.1"/>
    <property type="molecule type" value="Genomic_DNA"/>
</dbReference>
<dbReference type="SMR" id="B5VQB6"/>
<dbReference type="Proteomes" id="UP000008988">
    <property type="component" value="Unassembled WGS sequence"/>
</dbReference>
<dbReference type="GO" id="GO:0005935">
    <property type="term" value="C:cellular bud neck"/>
    <property type="evidence" value="ECO:0007669"/>
    <property type="project" value="UniProtKB-SubCell"/>
</dbReference>
<dbReference type="GO" id="GO:0005934">
    <property type="term" value="C:cellular bud tip"/>
    <property type="evidence" value="ECO:0007669"/>
    <property type="project" value="UniProtKB-SubCell"/>
</dbReference>
<dbReference type="GO" id="GO:0005789">
    <property type="term" value="C:endoplasmic reticulum membrane"/>
    <property type="evidence" value="ECO:0007669"/>
    <property type="project" value="UniProtKB-SubCell"/>
</dbReference>
<dbReference type="GO" id="GO:0005525">
    <property type="term" value="F:GTP binding"/>
    <property type="evidence" value="ECO:0007669"/>
    <property type="project" value="UniProtKB-KW"/>
</dbReference>
<dbReference type="GO" id="GO:0003924">
    <property type="term" value="F:GTPase activity"/>
    <property type="evidence" value="ECO:0007669"/>
    <property type="project" value="InterPro"/>
</dbReference>
<dbReference type="CDD" id="cd00154">
    <property type="entry name" value="Rab"/>
    <property type="match status" value="1"/>
</dbReference>
<dbReference type="FunFam" id="3.40.50.300:FF:002492">
    <property type="entry name" value="GTP-binding protein YPT11"/>
    <property type="match status" value="1"/>
</dbReference>
<dbReference type="Gene3D" id="3.40.50.300">
    <property type="entry name" value="P-loop containing nucleotide triphosphate hydrolases"/>
    <property type="match status" value="1"/>
</dbReference>
<dbReference type="InterPro" id="IPR027417">
    <property type="entry name" value="P-loop_NTPase"/>
</dbReference>
<dbReference type="InterPro" id="IPR050227">
    <property type="entry name" value="Rab"/>
</dbReference>
<dbReference type="InterPro" id="IPR005225">
    <property type="entry name" value="Small_GTP-bd"/>
</dbReference>
<dbReference type="InterPro" id="IPR001806">
    <property type="entry name" value="Small_GTPase"/>
</dbReference>
<dbReference type="NCBIfam" id="TIGR00231">
    <property type="entry name" value="small_GTP"/>
    <property type="match status" value="1"/>
</dbReference>
<dbReference type="PANTHER" id="PTHR47977">
    <property type="entry name" value="RAS-RELATED PROTEIN RAB"/>
    <property type="match status" value="1"/>
</dbReference>
<dbReference type="Pfam" id="PF00071">
    <property type="entry name" value="Ras"/>
    <property type="match status" value="1"/>
</dbReference>
<dbReference type="SMART" id="SM00175">
    <property type="entry name" value="RAB"/>
    <property type="match status" value="1"/>
</dbReference>
<dbReference type="SMART" id="SM00173">
    <property type="entry name" value="RAS"/>
    <property type="match status" value="1"/>
</dbReference>
<dbReference type="SMART" id="SM00174">
    <property type="entry name" value="RHO"/>
    <property type="match status" value="1"/>
</dbReference>
<dbReference type="SUPFAM" id="SSF52540">
    <property type="entry name" value="P-loop containing nucleoside triphosphate hydrolases"/>
    <property type="match status" value="1"/>
</dbReference>
<dbReference type="PROSITE" id="PS51419">
    <property type="entry name" value="RAB"/>
    <property type="match status" value="1"/>
</dbReference>
<keyword id="KW-0256">Endoplasmic reticulum</keyword>
<keyword id="KW-0342">GTP-binding</keyword>
<keyword id="KW-0449">Lipoprotein</keyword>
<keyword id="KW-0472">Membrane</keyword>
<keyword id="KW-0547">Nucleotide-binding</keyword>
<keyword id="KW-0636">Prenylation</keyword>
<reference key="1">
    <citation type="journal article" date="2008" name="FEMS Yeast Res.">
        <title>Comparative genome analysis of a Saccharomyces cerevisiae wine strain.</title>
        <authorList>
            <person name="Borneman A.R."/>
            <person name="Forgan A.H."/>
            <person name="Pretorius I.S."/>
            <person name="Chambers P.J."/>
        </authorList>
    </citation>
    <scope>NUCLEOTIDE SEQUENCE [LARGE SCALE GENOMIC DNA]</scope>
    <source>
        <strain>AWRI1631</strain>
    </source>
</reference>
<evidence type="ECO:0000250" key="1"/>
<evidence type="ECO:0000255" key="2"/>
<evidence type="ECO:0000256" key="3">
    <source>
        <dbReference type="SAM" id="MobiDB-lite"/>
    </source>
</evidence>
<evidence type="ECO:0000305" key="4"/>
<sequence length="417" mass="47116">MSQRKRYSLNVVTSPSIPSPTPSAPIRTNESNWEAASPASAASSFLPNVHHGGTVLNPGLGIMRSPSLNKSGAFGRSGSSGSSTVIEPSNIKLLLIGDANVGKTAMILSYCRELLTRAEMSRSARLRHQQQQQHKDLGLKKTVVNHRLSMKEKRKRYSSNDFEKEFKDINHFADETSDFGNPNIGDDNNHEMADPNEIVIETRSTIGIDIKTNLVNIDNRFFNVILWDTAGQERYQNAIIPSLYKKTNAVILTYDITNAKSFQSCMERWIVQALENFSSQDLLKARFFLVGNKIDLYKERQVTHYDVVQMVQEMQLKHGIKISGNFEVSCKWVNVVERTMNMIILDLVENGCFENNDPCVSITTSDDVQGHEQEFHDTVEEPFNFTRQRQHQLEKNNTVDITKPNDDIANNQSICCV</sequence>
<accession>B5VQB6</accession>
<feature type="chain" id="PRO_0000377660" description="GTP-binding protein YPT11">
    <location>
        <begin position="1"/>
        <end position="417"/>
    </location>
</feature>
<feature type="region of interest" description="Disordered" evidence="3">
    <location>
        <begin position="1"/>
        <end position="34"/>
    </location>
</feature>
<feature type="binding site" evidence="2">
    <location>
        <begin position="97"/>
        <end position="104"/>
    </location>
    <ligand>
        <name>GTP</name>
        <dbReference type="ChEBI" id="CHEBI:37565"/>
    </ligand>
</feature>
<feature type="binding site" evidence="2">
    <location>
        <begin position="228"/>
        <end position="232"/>
    </location>
    <ligand>
        <name>GTP</name>
        <dbReference type="ChEBI" id="CHEBI:37565"/>
    </ligand>
</feature>
<feature type="binding site" evidence="2">
    <location>
        <begin position="292"/>
        <end position="295"/>
    </location>
    <ligand>
        <name>GTP</name>
        <dbReference type="ChEBI" id="CHEBI:37565"/>
    </ligand>
</feature>
<feature type="lipid moiety-binding region" description="S-geranylgeranyl cysteine" evidence="1">
    <location>
        <position position="415"/>
    </location>
</feature>
<feature type="lipid moiety-binding region" description="S-geranylgeranyl cysteine" evidence="1">
    <location>
        <position position="416"/>
    </location>
</feature>
<gene>
    <name type="primary">YPT11</name>
    <name type="ORF">AWRI1631_140310</name>
</gene>
<comment type="function">
    <text evidence="1">Involved in the positive control of both endoplasmic reticulum (ER) and mitochondrion inheritance during cell divison. Required for the MYO2-dependent retention of newly inherited mitochondria at the bud tip in developing daughter cells (By similarity).</text>
</comment>
<comment type="subunit">
    <text evidence="1">Interacts with MYO2 (via C-terminal tail domain). Interacts with YIF1, YIP3, YIP4 and YIP5 (By similarity).</text>
</comment>
<comment type="subcellular location">
    <subcellularLocation>
        <location evidence="1">Endoplasmic reticulum membrane</location>
        <topology evidence="1">Lipid-anchor</topology>
        <orientation evidence="1">Cytoplasmic side</orientation>
    </subcellularLocation>
    <subcellularLocation>
        <location evidence="1">Bud tip</location>
    </subcellularLocation>
    <subcellularLocation>
        <location evidence="1">Bud neck</location>
    </subcellularLocation>
    <text evidence="1">Enriched in the peripheral ER of small buds and daughter cells. Concentrates at the site of bud emergence, at the bud tip of the growing bud, and at the bud neck during the M phase. Interaction with MYO2 is required for proper localization to the bud (By similarity).</text>
</comment>
<comment type="similarity">
    <text evidence="4">Belongs to the small GTPase superfamily. Rab family.</text>
</comment>
<organism>
    <name type="scientific">Saccharomyces cerevisiae (strain AWRI1631)</name>
    <name type="common">Baker's yeast</name>
    <dbReference type="NCBI Taxonomy" id="545124"/>
    <lineage>
        <taxon>Eukaryota</taxon>
        <taxon>Fungi</taxon>
        <taxon>Dikarya</taxon>
        <taxon>Ascomycota</taxon>
        <taxon>Saccharomycotina</taxon>
        <taxon>Saccharomycetes</taxon>
        <taxon>Saccharomycetales</taxon>
        <taxon>Saccharomycetaceae</taxon>
        <taxon>Saccharomyces</taxon>
    </lineage>
</organism>